<gene>
    <name type="ordered locus">Npun_F4413</name>
</gene>
<accession>B2IUK8</accession>
<feature type="chain" id="PRO_1000130441" description="Probable small ribosomal subunit protein cS23">
    <location>
        <begin position="1"/>
        <end position="99"/>
    </location>
</feature>
<comment type="function">
    <text evidence="1">Probably a ribosomal protein or a ribosome-associated protein.</text>
</comment>
<comment type="subunit">
    <text evidence="1">Part of the 30S ribosomal subunit.</text>
</comment>
<comment type="similarity">
    <text evidence="1">Belongs to the chloroplast-specific ribosomal protein cS23 family.</text>
</comment>
<keyword id="KW-1185">Reference proteome</keyword>
<keyword id="KW-0687">Ribonucleoprotein</keyword>
<keyword id="KW-0689">Ribosomal protein</keyword>
<evidence type="ECO:0000255" key="1">
    <source>
        <dbReference type="HAMAP-Rule" id="MF_00619"/>
    </source>
</evidence>
<organism>
    <name type="scientific">Nostoc punctiforme (strain ATCC 29133 / PCC 73102)</name>
    <dbReference type="NCBI Taxonomy" id="63737"/>
    <lineage>
        <taxon>Bacteria</taxon>
        <taxon>Bacillati</taxon>
        <taxon>Cyanobacteriota</taxon>
        <taxon>Cyanophyceae</taxon>
        <taxon>Nostocales</taxon>
        <taxon>Nostocaceae</taxon>
        <taxon>Nostoc</taxon>
    </lineage>
</organism>
<name>RRP3_NOSP7</name>
<proteinExistence type="inferred from homology"/>
<protein>
    <recommendedName>
        <fullName evidence="1">Probable small ribosomal subunit protein cS23</fullName>
    </recommendedName>
    <alternativeName>
        <fullName>Probable 30S ribosomal protein PSRP-3</fullName>
    </alternativeName>
    <alternativeName>
        <fullName>Ycf65-like protein</fullName>
    </alternativeName>
</protein>
<reference key="1">
    <citation type="journal article" date="2013" name="Plant Physiol.">
        <title>A Nostoc punctiforme Sugar Transporter Necessary to Establish a Cyanobacterium-Plant Symbiosis.</title>
        <authorList>
            <person name="Ekman M."/>
            <person name="Picossi S."/>
            <person name="Campbell E.L."/>
            <person name="Meeks J.C."/>
            <person name="Flores E."/>
        </authorList>
    </citation>
    <scope>NUCLEOTIDE SEQUENCE [LARGE SCALE GENOMIC DNA]</scope>
    <source>
        <strain>ATCC 29133 / PCC 73102</strain>
    </source>
</reference>
<dbReference type="EMBL" id="CP001037">
    <property type="protein sequence ID" value="ACC82783.1"/>
    <property type="molecule type" value="Genomic_DNA"/>
</dbReference>
<dbReference type="RefSeq" id="WP_012410744.1">
    <property type="nucleotide sequence ID" value="NC_010628.1"/>
</dbReference>
<dbReference type="SMR" id="B2IUK8"/>
<dbReference type="STRING" id="63737.Npun_F4413"/>
<dbReference type="EnsemblBacteria" id="ACC82783">
    <property type="protein sequence ID" value="ACC82783"/>
    <property type="gene ID" value="Npun_F4413"/>
</dbReference>
<dbReference type="KEGG" id="npu:Npun_F4413"/>
<dbReference type="eggNOG" id="ENOG503137T">
    <property type="taxonomic scope" value="Bacteria"/>
</dbReference>
<dbReference type="HOGENOM" id="CLU_132693_1_0_3"/>
<dbReference type="OrthoDB" id="486850at2"/>
<dbReference type="PhylomeDB" id="B2IUK8"/>
<dbReference type="Proteomes" id="UP000001191">
    <property type="component" value="Chromosome"/>
</dbReference>
<dbReference type="GO" id="GO:1990904">
    <property type="term" value="C:ribonucleoprotein complex"/>
    <property type="evidence" value="ECO:0007669"/>
    <property type="project" value="UniProtKB-KW"/>
</dbReference>
<dbReference type="GO" id="GO:0005840">
    <property type="term" value="C:ribosome"/>
    <property type="evidence" value="ECO:0007669"/>
    <property type="project" value="UniProtKB-KW"/>
</dbReference>
<dbReference type="GO" id="GO:0003735">
    <property type="term" value="F:structural constituent of ribosome"/>
    <property type="evidence" value="ECO:0007669"/>
    <property type="project" value="InterPro"/>
</dbReference>
<dbReference type="GO" id="GO:0006412">
    <property type="term" value="P:translation"/>
    <property type="evidence" value="ECO:0007669"/>
    <property type="project" value="UniProtKB-UniRule"/>
</dbReference>
<dbReference type="Gene3D" id="3.30.390.140">
    <property type="match status" value="1"/>
</dbReference>
<dbReference type="HAMAP" id="MF_00619">
    <property type="entry name" value="Ribosomal_plastid_cS23"/>
    <property type="match status" value="1"/>
</dbReference>
<dbReference type="InterPro" id="IPR038447">
    <property type="entry name" value="PSRP-3/Ycf65_sf"/>
</dbReference>
<dbReference type="InterPro" id="IPR006924">
    <property type="entry name" value="Ribosomal_PSRP3/Ycf65"/>
</dbReference>
<dbReference type="NCBIfam" id="NF002740">
    <property type="entry name" value="PRK02724.1"/>
    <property type="match status" value="1"/>
</dbReference>
<dbReference type="PANTHER" id="PTHR35108">
    <property type="entry name" value="30S RIBOSOMAL PROTEIN 3, CHLOROPLASTIC"/>
    <property type="match status" value="1"/>
</dbReference>
<dbReference type="PANTHER" id="PTHR35108:SF1">
    <property type="entry name" value="OS04G0461100 PROTEIN"/>
    <property type="match status" value="1"/>
</dbReference>
<dbReference type="Pfam" id="PF04839">
    <property type="entry name" value="PSRP-3_Ycf65"/>
    <property type="match status" value="1"/>
</dbReference>
<sequence>MTKFILKILWLDENVALAVDQIVGKGTSPLTKYFFWPRNDAWEELKKELESKHWITDLDRVELLNKATEVINYWQEEGRNRPMAEAQLKFPEVAFTGSA</sequence>